<name>RRT5_VANPO</name>
<organism>
    <name type="scientific">Vanderwaltozyma polyspora (strain ATCC 22028 / DSM 70294 / BCRC 21397 / CBS 2163 / NBRC 10782 / NRRL Y-8283 / UCD 57-17)</name>
    <name type="common">Kluyveromyces polysporus</name>
    <dbReference type="NCBI Taxonomy" id="436907"/>
    <lineage>
        <taxon>Eukaryota</taxon>
        <taxon>Fungi</taxon>
        <taxon>Dikarya</taxon>
        <taxon>Ascomycota</taxon>
        <taxon>Saccharomycotina</taxon>
        <taxon>Saccharomycetes</taxon>
        <taxon>Saccharomycetales</taxon>
        <taxon>Saccharomycetaceae</taxon>
        <taxon>Vanderwaltozyma</taxon>
    </lineage>
</organism>
<evidence type="ECO:0000250" key="1"/>
<evidence type="ECO:0000255" key="2">
    <source>
        <dbReference type="PROSITE-ProRule" id="PRU00176"/>
    </source>
</evidence>
<evidence type="ECO:0000256" key="3">
    <source>
        <dbReference type="SAM" id="MobiDB-lite"/>
    </source>
</evidence>
<evidence type="ECO:0000305" key="4"/>
<keyword id="KW-1185">Reference proteome</keyword>
<keyword id="KW-0677">Repeat</keyword>
<keyword id="KW-0694">RNA-binding</keyword>
<keyword id="KW-0804">Transcription</keyword>
<keyword id="KW-0805">Transcription regulation</keyword>
<dbReference type="EMBL" id="DS480462">
    <property type="protein sequence ID" value="EDO15407.1"/>
    <property type="molecule type" value="Genomic_DNA"/>
</dbReference>
<dbReference type="RefSeq" id="XP_001643265.1">
    <property type="nucleotide sequence ID" value="XM_001643215.1"/>
</dbReference>
<dbReference type="FunCoup" id="A7TQR2">
    <property type="interactions" value="211"/>
</dbReference>
<dbReference type="STRING" id="436907.A7TQR2"/>
<dbReference type="GeneID" id="5543482"/>
<dbReference type="KEGG" id="vpo:Kpol_1063p18"/>
<dbReference type="eggNOG" id="ENOG502RZDM">
    <property type="taxonomic scope" value="Eukaryota"/>
</dbReference>
<dbReference type="HOGENOM" id="CLU_042558_0_0_1"/>
<dbReference type="InParanoid" id="A7TQR2"/>
<dbReference type="OMA" id="IWIFRTR"/>
<dbReference type="OrthoDB" id="439808at2759"/>
<dbReference type="PhylomeDB" id="A7TQR2"/>
<dbReference type="Proteomes" id="UP000000267">
    <property type="component" value="Unassembled WGS sequence"/>
</dbReference>
<dbReference type="GO" id="GO:0003723">
    <property type="term" value="F:RNA binding"/>
    <property type="evidence" value="ECO:0007669"/>
    <property type="project" value="UniProtKB-KW"/>
</dbReference>
<dbReference type="CDD" id="cd12409">
    <property type="entry name" value="RRM1_RRT5"/>
    <property type="match status" value="1"/>
</dbReference>
<dbReference type="CDD" id="cd12410">
    <property type="entry name" value="RRM2_RRT5"/>
    <property type="match status" value="1"/>
</dbReference>
<dbReference type="Gene3D" id="3.30.70.330">
    <property type="match status" value="2"/>
</dbReference>
<dbReference type="InterPro" id="IPR012677">
    <property type="entry name" value="Nucleotide-bd_a/b_plait_sf"/>
</dbReference>
<dbReference type="InterPro" id="IPR035979">
    <property type="entry name" value="RBD_domain_sf"/>
</dbReference>
<dbReference type="InterPro" id="IPR000504">
    <property type="entry name" value="RRM_dom"/>
</dbReference>
<dbReference type="InterPro" id="IPR034244">
    <property type="entry name" value="Rrt5_RRM1"/>
</dbReference>
<dbReference type="InterPro" id="IPR034247">
    <property type="entry name" value="Rrt5_RRM2"/>
</dbReference>
<dbReference type="PANTHER" id="PTHR23236">
    <property type="entry name" value="EUKARYOTIC TRANSLATION INITIATION FACTOR 4B/4H"/>
    <property type="match status" value="1"/>
</dbReference>
<dbReference type="PANTHER" id="PTHR23236:SF119">
    <property type="entry name" value="NUCLEAR RNA-BINDING PROTEIN SART-3"/>
    <property type="match status" value="1"/>
</dbReference>
<dbReference type="Pfam" id="PF00076">
    <property type="entry name" value="RRM_1"/>
    <property type="match status" value="2"/>
</dbReference>
<dbReference type="SMART" id="SM00360">
    <property type="entry name" value="RRM"/>
    <property type="match status" value="2"/>
</dbReference>
<dbReference type="SUPFAM" id="SSF54928">
    <property type="entry name" value="RNA-binding domain, RBD"/>
    <property type="match status" value="2"/>
</dbReference>
<dbReference type="PROSITE" id="PS50102">
    <property type="entry name" value="RRM"/>
    <property type="match status" value="1"/>
</dbReference>
<feature type="chain" id="PRO_0000404360" description="Regulator of rDNA transcription protein 5">
    <location>
        <begin position="1"/>
        <end position="333"/>
    </location>
</feature>
<feature type="domain" description="RRM 1" evidence="2">
    <location>
        <begin position="31"/>
        <end position="114"/>
    </location>
</feature>
<feature type="domain" description="RRM 2" evidence="2">
    <location>
        <begin position="182"/>
        <end position="267"/>
    </location>
</feature>
<feature type="region of interest" description="Disordered" evidence="3">
    <location>
        <begin position="1"/>
        <end position="22"/>
    </location>
</feature>
<feature type="region of interest" description="Disordered" evidence="3">
    <location>
        <begin position="123"/>
        <end position="185"/>
    </location>
</feature>
<feature type="region of interest" description="Disordered" evidence="3">
    <location>
        <begin position="281"/>
        <end position="333"/>
    </location>
</feature>
<feature type="compositionally biased region" description="Basic residues" evidence="3">
    <location>
        <begin position="125"/>
        <end position="137"/>
    </location>
</feature>
<feature type="compositionally biased region" description="Polar residues" evidence="3">
    <location>
        <begin position="145"/>
        <end position="160"/>
    </location>
</feature>
<feature type="compositionally biased region" description="Polar residues" evidence="3">
    <location>
        <begin position="169"/>
        <end position="182"/>
    </location>
</feature>
<feature type="compositionally biased region" description="Gly residues" evidence="3">
    <location>
        <begin position="298"/>
        <end position="308"/>
    </location>
</feature>
<feature type="compositionally biased region" description="Polar residues" evidence="3">
    <location>
        <begin position="313"/>
        <end position="327"/>
    </location>
</feature>
<reference key="1">
    <citation type="journal article" date="2007" name="Proc. Natl. Acad. Sci. U.S.A.">
        <title>Independent sorting-out of thousands of duplicated gene pairs in two yeast species descended from a whole-genome duplication.</title>
        <authorList>
            <person name="Scannell D.R."/>
            <person name="Frank A.C."/>
            <person name="Conant G.C."/>
            <person name="Byrne K.P."/>
            <person name="Woolfit M."/>
            <person name="Wolfe K.H."/>
        </authorList>
    </citation>
    <scope>NUCLEOTIDE SEQUENCE [LARGE SCALE GENOMIC DNA]</scope>
    <source>
        <strain>ATCC 22028 / DSM 70294 / BCRC 21397 / CBS 2163 / NBRC 10782 / NRRL Y-8283 / UCD 57-17</strain>
    </source>
</reference>
<sequence length="333" mass="36876">MFERQSNNPEPIEVSDNNPERESTADALLTTRIYISNLDYSSTEDELIEYLKDYKPLSVLVPSHTVRGFRSNHVKPLGIAYADFETPEKAREAVEALNETNFKNRNLKVKLYVPFSPENVCKPAPKPRRLSKLRRSKKPADEENNAASQDPTVEATQERGQASEDPENAANNAKQAKPTSDDTVYCGYLPKNTTDADLREHFKDYNPQEIWIFRTRAAKGPMHLQLHRHYTAALITLNSPETIAKIAEVTSTKKILGKKISVKPAYISKIQEVKKIAEQTGIAERNQTNKGAIKPNSGNGGQPAGPGVAGEPSNPQQNCDNSNNVQPGVSVVA</sequence>
<protein>
    <recommendedName>
        <fullName>Regulator of rDNA transcription protein 5</fullName>
    </recommendedName>
</protein>
<comment type="function">
    <text evidence="1">May be involved in the modulation of rDNA transcription.</text>
</comment>
<comment type="similarity">
    <text evidence="4">Belongs to the RRT5 family.</text>
</comment>
<accession>A7TQR2</accession>
<gene>
    <name type="primary">RRT5</name>
    <name type="ORF">Kpol_1063p18</name>
</gene>
<proteinExistence type="inferred from homology"/>